<keyword id="KW-0030">Aminoacyl-tRNA synthetase</keyword>
<keyword id="KW-0067">ATP-binding</keyword>
<keyword id="KW-0963">Cytoplasm</keyword>
<keyword id="KW-0436">Ligase</keyword>
<keyword id="KW-0547">Nucleotide-binding</keyword>
<keyword id="KW-0648">Protein biosynthesis</keyword>
<dbReference type="EC" id="6.1.1.4" evidence="1"/>
<dbReference type="EMBL" id="BX572593">
    <property type="protein sequence ID" value="CAE25731.1"/>
    <property type="molecule type" value="Genomic_DNA"/>
</dbReference>
<dbReference type="RefSeq" id="WP_011155855.1">
    <property type="nucleotide sequence ID" value="NZ_CP116810.1"/>
</dbReference>
<dbReference type="SMR" id="Q6ND22"/>
<dbReference type="STRING" id="258594.RPA0287"/>
<dbReference type="GeneID" id="66891297"/>
<dbReference type="eggNOG" id="COG0495">
    <property type="taxonomic scope" value="Bacteria"/>
</dbReference>
<dbReference type="HOGENOM" id="CLU_004427_0_0_5"/>
<dbReference type="PhylomeDB" id="Q6ND22"/>
<dbReference type="GO" id="GO:0005829">
    <property type="term" value="C:cytosol"/>
    <property type="evidence" value="ECO:0007669"/>
    <property type="project" value="TreeGrafter"/>
</dbReference>
<dbReference type="GO" id="GO:0002161">
    <property type="term" value="F:aminoacyl-tRNA deacylase activity"/>
    <property type="evidence" value="ECO:0007669"/>
    <property type="project" value="InterPro"/>
</dbReference>
<dbReference type="GO" id="GO:0005524">
    <property type="term" value="F:ATP binding"/>
    <property type="evidence" value="ECO:0007669"/>
    <property type="project" value="UniProtKB-UniRule"/>
</dbReference>
<dbReference type="GO" id="GO:0004823">
    <property type="term" value="F:leucine-tRNA ligase activity"/>
    <property type="evidence" value="ECO:0007669"/>
    <property type="project" value="UniProtKB-UniRule"/>
</dbReference>
<dbReference type="GO" id="GO:0006429">
    <property type="term" value="P:leucyl-tRNA aminoacylation"/>
    <property type="evidence" value="ECO:0007669"/>
    <property type="project" value="UniProtKB-UniRule"/>
</dbReference>
<dbReference type="CDD" id="cd07958">
    <property type="entry name" value="Anticodon_Ia_Leu_BEm"/>
    <property type="match status" value="1"/>
</dbReference>
<dbReference type="CDD" id="cd00812">
    <property type="entry name" value="LeuRS_core"/>
    <property type="match status" value="1"/>
</dbReference>
<dbReference type="FunFam" id="1.10.730.10:FF:000002">
    <property type="entry name" value="Leucine--tRNA ligase"/>
    <property type="match status" value="1"/>
</dbReference>
<dbReference type="FunFam" id="3.40.50.620:FF:000003">
    <property type="entry name" value="Leucine--tRNA ligase"/>
    <property type="match status" value="1"/>
</dbReference>
<dbReference type="Gene3D" id="2.20.28.290">
    <property type="match status" value="1"/>
</dbReference>
<dbReference type="Gene3D" id="3.10.20.590">
    <property type="match status" value="1"/>
</dbReference>
<dbReference type="Gene3D" id="3.40.50.620">
    <property type="entry name" value="HUPs"/>
    <property type="match status" value="2"/>
</dbReference>
<dbReference type="Gene3D" id="1.10.730.10">
    <property type="entry name" value="Isoleucyl-tRNA Synthetase, Domain 1"/>
    <property type="match status" value="1"/>
</dbReference>
<dbReference type="HAMAP" id="MF_00049_B">
    <property type="entry name" value="Leu_tRNA_synth_B"/>
    <property type="match status" value="1"/>
</dbReference>
<dbReference type="InterPro" id="IPR001412">
    <property type="entry name" value="aa-tRNA-synth_I_CS"/>
</dbReference>
<dbReference type="InterPro" id="IPR002300">
    <property type="entry name" value="aa-tRNA-synth_Ia"/>
</dbReference>
<dbReference type="InterPro" id="IPR002302">
    <property type="entry name" value="Leu-tRNA-ligase"/>
</dbReference>
<dbReference type="InterPro" id="IPR025709">
    <property type="entry name" value="Leu_tRNA-synth_edit"/>
</dbReference>
<dbReference type="InterPro" id="IPR013155">
    <property type="entry name" value="M/V/L/I-tRNA-synth_anticd-bd"/>
</dbReference>
<dbReference type="InterPro" id="IPR015413">
    <property type="entry name" value="Methionyl/Leucyl_tRNA_Synth"/>
</dbReference>
<dbReference type="InterPro" id="IPR014729">
    <property type="entry name" value="Rossmann-like_a/b/a_fold"/>
</dbReference>
<dbReference type="InterPro" id="IPR009080">
    <property type="entry name" value="tRNAsynth_Ia_anticodon-bd"/>
</dbReference>
<dbReference type="InterPro" id="IPR009008">
    <property type="entry name" value="Val/Leu/Ile-tRNA-synth_edit"/>
</dbReference>
<dbReference type="NCBIfam" id="TIGR00396">
    <property type="entry name" value="leuS_bact"/>
    <property type="match status" value="1"/>
</dbReference>
<dbReference type="PANTHER" id="PTHR43740:SF2">
    <property type="entry name" value="LEUCINE--TRNA LIGASE, MITOCHONDRIAL"/>
    <property type="match status" value="1"/>
</dbReference>
<dbReference type="PANTHER" id="PTHR43740">
    <property type="entry name" value="LEUCYL-TRNA SYNTHETASE"/>
    <property type="match status" value="1"/>
</dbReference>
<dbReference type="Pfam" id="PF08264">
    <property type="entry name" value="Anticodon_1"/>
    <property type="match status" value="1"/>
</dbReference>
<dbReference type="Pfam" id="PF00133">
    <property type="entry name" value="tRNA-synt_1"/>
    <property type="match status" value="2"/>
</dbReference>
<dbReference type="Pfam" id="PF13603">
    <property type="entry name" value="tRNA-synt_1_2"/>
    <property type="match status" value="1"/>
</dbReference>
<dbReference type="Pfam" id="PF09334">
    <property type="entry name" value="tRNA-synt_1g"/>
    <property type="match status" value="1"/>
</dbReference>
<dbReference type="PRINTS" id="PR00985">
    <property type="entry name" value="TRNASYNTHLEU"/>
</dbReference>
<dbReference type="SUPFAM" id="SSF47323">
    <property type="entry name" value="Anticodon-binding domain of a subclass of class I aminoacyl-tRNA synthetases"/>
    <property type="match status" value="1"/>
</dbReference>
<dbReference type="SUPFAM" id="SSF52374">
    <property type="entry name" value="Nucleotidylyl transferase"/>
    <property type="match status" value="1"/>
</dbReference>
<dbReference type="SUPFAM" id="SSF50677">
    <property type="entry name" value="ValRS/IleRS/LeuRS editing domain"/>
    <property type="match status" value="1"/>
</dbReference>
<dbReference type="PROSITE" id="PS00178">
    <property type="entry name" value="AA_TRNA_LIGASE_I"/>
    <property type="match status" value="1"/>
</dbReference>
<comment type="catalytic activity">
    <reaction evidence="1">
        <text>tRNA(Leu) + L-leucine + ATP = L-leucyl-tRNA(Leu) + AMP + diphosphate</text>
        <dbReference type="Rhea" id="RHEA:11688"/>
        <dbReference type="Rhea" id="RHEA-COMP:9613"/>
        <dbReference type="Rhea" id="RHEA-COMP:9622"/>
        <dbReference type="ChEBI" id="CHEBI:30616"/>
        <dbReference type="ChEBI" id="CHEBI:33019"/>
        <dbReference type="ChEBI" id="CHEBI:57427"/>
        <dbReference type="ChEBI" id="CHEBI:78442"/>
        <dbReference type="ChEBI" id="CHEBI:78494"/>
        <dbReference type="ChEBI" id="CHEBI:456215"/>
        <dbReference type="EC" id="6.1.1.4"/>
    </reaction>
</comment>
<comment type="subcellular location">
    <subcellularLocation>
        <location evidence="1">Cytoplasm</location>
    </subcellularLocation>
</comment>
<comment type="similarity">
    <text evidence="1">Belongs to the class-I aminoacyl-tRNA synthetase family.</text>
</comment>
<evidence type="ECO:0000255" key="1">
    <source>
        <dbReference type="HAMAP-Rule" id="MF_00049"/>
    </source>
</evidence>
<accession>Q6ND22</accession>
<sequence>MSNERYNARESEPKWQAKWDEAKIFATRNDDLRKKYYVLEMFPYPSGRIHMGHVRNYTMGDVVARTMRARGYNVLHPMGWDAFGLPAENAAIERKVAPKAWTYDNIAAMKKQLQTMGLSLDWAREFATCDPSYYKHQQKMFLDFLKVGLVEREKRKLNWDPVDMTVLANEQVIDGRGWRSGAVVELREMNQWVFKITKYAQELLDALDTLDRWPDKVRLMQRNWIGRSEGLMVRFALDSATTPAGETELKIFTTRPDTLFGAKFMAIAADHPLAQAAAAKAPKVAAFIDDCKKRGTAQAEIDTAEKQGIDTGIRAVHPFDPSWKLPVYVANFVLMEYGTGAIFGCPAHDQRDLDFVNKYQLGNTPVVCPEGQDPASFVITDTAYDGEGRMINSRFLDGKTIAEAKEEVAKRLETEQLAGAPVGARKVNFRLRDWGISRQRYWGCPIPIIHCPTCDVVPVPDADLPVVLPEDVSFDKPGNALDHHPTWKHVTCPKCGGKAVRETDTMDTFVDSSWYFARFTDPWNTEAPTTPDVVNRMMPVDQYIGGVEHAILHLLYSRFFTRAMKAAGHIDIQHDEPFAGLFTQGMVVHETYRKADGHFASPAEISITVEGDTRRATLLDGGSPVEIGPIEKMSKSKRNTVDPDDIIGTYGADTARWFMLSDSPPDRDVIWSEEGVKGASRFVQRLWRMVNDAAPIAASAPAERPASFGADALTLRKAAHGALDKVLSGIERLAFNVSLAHIREFSNTLGDALARSQTPSPDLAWAIRESTVILVQLFHPMMPHLAEECWTVLGQTGLVSEALWPPIEQDLLVEDSITLPVQVNGKKRGDVTVPRDAPTSEIEAAVLALDTVKQALGGKPVRKVIVVPQRIVNVVG</sequence>
<name>SYL_RHOPA</name>
<feature type="chain" id="PRO_0000152073" description="Leucine--tRNA ligase">
    <location>
        <begin position="1"/>
        <end position="876"/>
    </location>
</feature>
<feature type="short sequence motif" description="'HIGH' region">
    <location>
        <begin position="43"/>
        <end position="53"/>
    </location>
</feature>
<feature type="short sequence motif" description="'KMSKS' region">
    <location>
        <begin position="632"/>
        <end position="636"/>
    </location>
</feature>
<feature type="binding site" evidence="1">
    <location>
        <position position="635"/>
    </location>
    <ligand>
        <name>ATP</name>
        <dbReference type="ChEBI" id="CHEBI:30616"/>
    </ligand>
</feature>
<protein>
    <recommendedName>
        <fullName evidence="1">Leucine--tRNA ligase</fullName>
        <ecNumber evidence="1">6.1.1.4</ecNumber>
    </recommendedName>
    <alternativeName>
        <fullName evidence="1">Leucyl-tRNA synthetase</fullName>
        <shortName evidence="1">LeuRS</shortName>
    </alternativeName>
</protein>
<reference key="1">
    <citation type="journal article" date="2004" name="Nat. Biotechnol.">
        <title>Complete genome sequence of the metabolically versatile photosynthetic bacterium Rhodopseudomonas palustris.</title>
        <authorList>
            <person name="Larimer F.W."/>
            <person name="Chain P."/>
            <person name="Hauser L."/>
            <person name="Lamerdin J.E."/>
            <person name="Malfatti S."/>
            <person name="Do L."/>
            <person name="Land M.L."/>
            <person name="Pelletier D.A."/>
            <person name="Beatty J.T."/>
            <person name="Lang A.S."/>
            <person name="Tabita F.R."/>
            <person name="Gibson J.L."/>
            <person name="Hanson T.E."/>
            <person name="Bobst C."/>
            <person name="Torres y Torres J.L."/>
            <person name="Peres C."/>
            <person name="Harrison F.H."/>
            <person name="Gibson J."/>
            <person name="Harwood C.S."/>
        </authorList>
    </citation>
    <scope>NUCLEOTIDE SEQUENCE [LARGE SCALE GENOMIC DNA]</scope>
    <source>
        <strain>ATCC BAA-98 / CGA009</strain>
    </source>
</reference>
<proteinExistence type="inferred from homology"/>
<organism>
    <name type="scientific">Rhodopseudomonas palustris (strain ATCC BAA-98 / CGA009)</name>
    <dbReference type="NCBI Taxonomy" id="258594"/>
    <lineage>
        <taxon>Bacteria</taxon>
        <taxon>Pseudomonadati</taxon>
        <taxon>Pseudomonadota</taxon>
        <taxon>Alphaproteobacteria</taxon>
        <taxon>Hyphomicrobiales</taxon>
        <taxon>Nitrobacteraceae</taxon>
        <taxon>Rhodopseudomonas</taxon>
    </lineage>
</organism>
<gene>
    <name evidence="1" type="primary">leuS</name>
    <name type="ordered locus">RPA0287</name>
</gene>